<gene>
    <name type="primary">MPZ</name>
</gene>
<reference key="1">
    <citation type="submission" date="2006-08" db="EMBL/GenBank/DDBJ databases">
        <authorList>
            <consortium name="NIH - Mammalian Gene Collection (MGC) project"/>
        </authorList>
    </citation>
    <scope>NUCLEOTIDE SEQUENCE [LARGE SCALE MRNA]</scope>
    <source>
        <strain>Hereford</strain>
        <tissue>Fetal skin</tissue>
    </source>
</reference>
<reference key="2">
    <citation type="journal article" date="1987" name="J. Biol. Chem.">
        <title>Complete amino acid sequence of PO protein in bovine peripheral nerve myelin.</title>
        <authorList>
            <person name="Sakamoto Y."/>
            <person name="Kitamura K."/>
            <person name="Yoshimura K."/>
            <person name="Nishijima T."/>
            <person name="Uyemura K."/>
        </authorList>
    </citation>
    <scope>PROTEIN SEQUENCE OF 29-248</scope>
    <scope>GLYCOSYLATION AT ASN-122</scope>
    <source>
        <tissue>Brain</tissue>
    </source>
</reference>
<reference key="3">
    <citation type="journal article" date="1990" name="J. Neurochem.">
        <title>Phosphorylation of P0 glycoprotein in peripheral nerve myelin.</title>
        <authorList>
            <person name="Suzuki M."/>
            <person name="Sakamoto Y."/>
            <person name="Kitamura K."/>
            <person name="Fukunaga K."/>
            <person name="Yamamoto H."/>
            <person name="Miyamoto E."/>
            <person name="Uyemura K."/>
        </authorList>
    </citation>
    <scope>PHOSPHORYLATION AT SER-210; SER-233 AND SER-243</scope>
</reference>
<keyword id="KW-1003">Cell membrane</keyword>
<keyword id="KW-0903">Direct protein sequencing</keyword>
<keyword id="KW-1015">Disulfide bond</keyword>
<keyword id="KW-0325">Glycoprotein</keyword>
<keyword id="KW-0393">Immunoglobulin domain</keyword>
<keyword id="KW-0472">Membrane</keyword>
<keyword id="KW-0597">Phosphoprotein</keyword>
<keyword id="KW-1185">Reference proteome</keyword>
<keyword id="KW-0732">Signal</keyword>
<keyword id="KW-0812">Transmembrane</keyword>
<keyword id="KW-1133">Transmembrane helix</keyword>
<proteinExistence type="evidence at protein level"/>
<protein>
    <recommendedName>
        <fullName>Myelin protein P0</fullName>
    </recommendedName>
    <alternativeName>
        <fullName>Myelin peripheral protein</fullName>
        <shortName>MPP</shortName>
    </alternativeName>
    <alternativeName>
        <fullName>Myelin protein zero</fullName>
    </alternativeName>
</protein>
<dbReference type="EMBL" id="BC122659">
    <property type="protein sequence ID" value="AAI22660.1"/>
    <property type="molecule type" value="mRNA"/>
</dbReference>
<dbReference type="PIR" id="A29128">
    <property type="entry name" value="A29128"/>
</dbReference>
<dbReference type="RefSeq" id="NP_001072975.1">
    <property type="nucleotide sequence ID" value="NM_001079507.2"/>
</dbReference>
<dbReference type="RefSeq" id="NP_001303288.1">
    <property type="nucleotide sequence ID" value="NM_001316359.1"/>
</dbReference>
<dbReference type="SMR" id="P10522"/>
<dbReference type="FunCoup" id="P10522">
    <property type="interactions" value="143"/>
</dbReference>
<dbReference type="STRING" id="9913.ENSBTAP00000045141"/>
<dbReference type="GlyConnect" id="427">
    <property type="glycosylation" value="22 N-Linked glycans (1 site)"/>
</dbReference>
<dbReference type="GlyCosmos" id="P10522">
    <property type="glycosylation" value="2 sites, 39 glycans"/>
</dbReference>
<dbReference type="GlyGen" id="P10522">
    <property type="glycosylation" value="1 site"/>
</dbReference>
<dbReference type="iPTMnet" id="P10522"/>
<dbReference type="PaxDb" id="9913-ENSBTAP00000045141"/>
<dbReference type="Ensembl" id="ENSBTAT00000048021.4">
    <property type="protein sequence ID" value="ENSBTAP00000045141.2"/>
    <property type="gene ID" value="ENSBTAG00000033835.4"/>
</dbReference>
<dbReference type="GeneID" id="539462"/>
<dbReference type="KEGG" id="bta:539462"/>
<dbReference type="CTD" id="4359"/>
<dbReference type="VEuPathDB" id="HostDB:ENSBTAG00000033835"/>
<dbReference type="VGNC" id="VGNC:31591">
    <property type="gene designation" value="MPZ"/>
</dbReference>
<dbReference type="eggNOG" id="ENOG502QVJ0">
    <property type="taxonomic scope" value="Eukaryota"/>
</dbReference>
<dbReference type="GeneTree" id="ENSGT01030000234556"/>
<dbReference type="HOGENOM" id="CLU_090350_3_1_1"/>
<dbReference type="InParanoid" id="P10522"/>
<dbReference type="OMA" id="WVGDPHW"/>
<dbReference type="OrthoDB" id="9941287at2759"/>
<dbReference type="TreeFam" id="TF331728"/>
<dbReference type="Proteomes" id="UP000009136">
    <property type="component" value="Chromosome 3"/>
</dbReference>
<dbReference type="Bgee" id="ENSBTAG00000033835">
    <property type="expression patterns" value="Expressed in pigment epithelium of eye and 75 other cell types or tissues"/>
</dbReference>
<dbReference type="GO" id="GO:0005886">
    <property type="term" value="C:plasma membrane"/>
    <property type="evidence" value="ECO:0000250"/>
    <property type="project" value="UniProtKB"/>
</dbReference>
<dbReference type="GO" id="GO:0098743">
    <property type="term" value="P:cell aggregation"/>
    <property type="evidence" value="ECO:0000250"/>
    <property type="project" value="UniProtKB"/>
</dbReference>
<dbReference type="GO" id="GO:0098742">
    <property type="term" value="P:cell-cell adhesion via plasma-membrane adhesion molecules"/>
    <property type="evidence" value="ECO:0000250"/>
    <property type="project" value="UniProtKB"/>
</dbReference>
<dbReference type="GO" id="GO:0042552">
    <property type="term" value="P:myelination"/>
    <property type="evidence" value="ECO:0000250"/>
    <property type="project" value="UniProtKB"/>
</dbReference>
<dbReference type="CDD" id="cd05879">
    <property type="entry name" value="IgV_P0"/>
    <property type="match status" value="1"/>
</dbReference>
<dbReference type="FunFam" id="2.60.40.10:FF:000193">
    <property type="entry name" value="Myelin protein zero-like 1 like"/>
    <property type="match status" value="1"/>
</dbReference>
<dbReference type="Gene3D" id="2.60.40.10">
    <property type="entry name" value="Immunoglobulins"/>
    <property type="match status" value="1"/>
</dbReference>
<dbReference type="InterPro" id="IPR007110">
    <property type="entry name" value="Ig-like_dom"/>
</dbReference>
<dbReference type="InterPro" id="IPR036179">
    <property type="entry name" value="Ig-like_dom_sf"/>
</dbReference>
<dbReference type="InterPro" id="IPR013783">
    <property type="entry name" value="Ig-like_fold"/>
</dbReference>
<dbReference type="InterPro" id="IPR003599">
    <property type="entry name" value="Ig_sub"/>
</dbReference>
<dbReference type="InterPro" id="IPR013106">
    <property type="entry name" value="Ig_V-set"/>
</dbReference>
<dbReference type="InterPro" id="IPR000920">
    <property type="entry name" value="Myelin_P0-rel"/>
</dbReference>
<dbReference type="InterPro" id="IPR019738">
    <property type="entry name" value="Myelin_P0_CS"/>
</dbReference>
<dbReference type="InterPro" id="IPR047014">
    <property type="entry name" value="Myelin_P0_Ig-like"/>
</dbReference>
<dbReference type="InterPro" id="IPR019566">
    <property type="entry name" value="MYP0_C"/>
</dbReference>
<dbReference type="PANTHER" id="PTHR13869">
    <property type="entry name" value="MYELIN P0 RELATED"/>
    <property type="match status" value="1"/>
</dbReference>
<dbReference type="PANTHER" id="PTHR13869:SF7">
    <property type="entry name" value="MYELIN PROTEIN P0"/>
    <property type="match status" value="1"/>
</dbReference>
<dbReference type="Pfam" id="PF10570">
    <property type="entry name" value="Myelin-PO_C"/>
    <property type="match status" value="1"/>
</dbReference>
<dbReference type="Pfam" id="PF07686">
    <property type="entry name" value="V-set"/>
    <property type="match status" value="1"/>
</dbReference>
<dbReference type="PRINTS" id="PR00213">
    <property type="entry name" value="MYELINP0"/>
</dbReference>
<dbReference type="SMART" id="SM00409">
    <property type="entry name" value="IG"/>
    <property type="match status" value="1"/>
</dbReference>
<dbReference type="SMART" id="SM00406">
    <property type="entry name" value="IGv"/>
    <property type="match status" value="1"/>
</dbReference>
<dbReference type="SUPFAM" id="SSF48726">
    <property type="entry name" value="Immunoglobulin"/>
    <property type="match status" value="1"/>
</dbReference>
<dbReference type="PROSITE" id="PS50835">
    <property type="entry name" value="IG_LIKE"/>
    <property type="match status" value="1"/>
</dbReference>
<dbReference type="PROSITE" id="PS00568">
    <property type="entry name" value="MYELIN_P0"/>
    <property type="match status" value="1"/>
</dbReference>
<organism>
    <name type="scientific">Bos taurus</name>
    <name type="common">Bovine</name>
    <dbReference type="NCBI Taxonomy" id="9913"/>
    <lineage>
        <taxon>Eukaryota</taxon>
        <taxon>Metazoa</taxon>
        <taxon>Chordata</taxon>
        <taxon>Craniata</taxon>
        <taxon>Vertebrata</taxon>
        <taxon>Euteleostomi</taxon>
        <taxon>Mammalia</taxon>
        <taxon>Eutheria</taxon>
        <taxon>Laurasiatheria</taxon>
        <taxon>Artiodactyla</taxon>
        <taxon>Ruminantia</taxon>
        <taxon>Pecora</taxon>
        <taxon>Bovidae</taxon>
        <taxon>Bovinae</taxon>
        <taxon>Bos</taxon>
    </lineage>
</organism>
<evidence type="ECO:0000250" key="1"/>
<evidence type="ECO:0000250" key="2">
    <source>
        <dbReference type="UniProtKB" id="P25189"/>
    </source>
</evidence>
<evidence type="ECO:0000250" key="3">
    <source>
        <dbReference type="UniProtKB" id="P27573"/>
    </source>
</evidence>
<evidence type="ECO:0000255" key="4"/>
<evidence type="ECO:0000255" key="5">
    <source>
        <dbReference type="PROSITE-ProRule" id="PRU00114"/>
    </source>
</evidence>
<evidence type="ECO:0000256" key="6">
    <source>
        <dbReference type="SAM" id="MobiDB-lite"/>
    </source>
</evidence>
<evidence type="ECO:0000269" key="7">
    <source>
    </source>
</evidence>
<evidence type="ECO:0000269" key="8">
    <source>
    </source>
</evidence>
<evidence type="ECO:0000305" key="9"/>
<name>MYP0_BOVIN</name>
<comment type="function">
    <text evidence="2">Is an adhesion molecule necessary for normal myelination in the peripheral nervous system. It mediates adhesion between adjacent myelin wraps and ultimately drives myelin compaction.</text>
</comment>
<comment type="subunit">
    <text evidence="1">Homodimer and homotetramer.</text>
</comment>
<comment type="subcellular location">
    <subcellularLocation>
        <location evidence="2">Cell membrane</location>
        <topology evidence="2">Single-pass type I membrane protein</topology>
    </subcellularLocation>
</comment>
<comment type="tissue specificity">
    <text>Found only in peripheral nervous system Schwann cells.</text>
</comment>
<comment type="PTM">
    <text evidence="8">N-glycosylated; contains sulfate-substituted glycan.</text>
</comment>
<comment type="similarity">
    <text evidence="9">Belongs to the myelin P0 protein family.</text>
</comment>
<accession>P10522</accession>
<accession>Q05B76</accession>
<feature type="signal peptide" evidence="8">
    <location>
        <begin position="1"/>
        <end position="28"/>
    </location>
</feature>
<feature type="chain" id="PRO_0000159002" description="Myelin protein P0">
    <location>
        <begin position="29"/>
        <end position="248"/>
    </location>
</feature>
<feature type="topological domain" description="Extracellular">
    <location>
        <begin position="29"/>
        <end position="155"/>
    </location>
</feature>
<feature type="transmembrane region" description="Helical" evidence="4">
    <location>
        <begin position="156"/>
        <end position="176"/>
    </location>
</feature>
<feature type="topological domain" description="Cytoplasmic">
    <location>
        <begin position="177"/>
        <end position="248"/>
    </location>
</feature>
<feature type="domain" description="Ig-like V-type">
    <location>
        <begin position="30"/>
        <end position="143"/>
    </location>
</feature>
<feature type="region of interest" description="Disordered" evidence="6">
    <location>
        <begin position="224"/>
        <end position="248"/>
    </location>
</feature>
<feature type="modified residue" description="Phosphoserine; by PKC" evidence="7">
    <location>
        <position position="210"/>
    </location>
</feature>
<feature type="modified residue" description="Phosphoserine" evidence="3">
    <location>
        <position position="226"/>
    </location>
</feature>
<feature type="modified residue" description="Phosphoserine" evidence="3">
    <location>
        <position position="228"/>
    </location>
</feature>
<feature type="modified residue" description="Phosphoserine; by PKC" evidence="7">
    <location>
        <position position="233"/>
    </location>
</feature>
<feature type="modified residue" description="Phosphoserine; by PKC" evidence="7">
    <location>
        <position position="243"/>
    </location>
</feature>
<feature type="glycosylation site" id="CAR_000221" description="N-linked (GlcNAc...) (complex) asparagine" evidence="8">
    <location>
        <position position="122"/>
    </location>
</feature>
<feature type="disulfide bond" evidence="5">
    <location>
        <begin position="50"/>
        <end position="127"/>
    </location>
</feature>
<sequence length="248" mass="27452">MAPGAPSSSPSPILAALLFSSLVLSPVQAIVVYTDKEVHGAVGSQVTLYCSFWSSEWVSDDLSFTWRYQPEGGRDAISIFHYAKGQPYIDEVGTFKERIQWVGDPHRKDGSIVIHNLDYGDNGTFTCDVKNPPDIVGKTSQVTLYVFEKVPTRYGVVLGAVIGGVLGVVLLALLLFYLIRYCWLRRQAALQRRLSAMEKGKLHKTAKDASKRGRQTPVLYAMLDHSRSTKAASEKKTKGLGESRKDKK</sequence>